<organism>
    <name type="scientific">Saccharolobus islandicus (strain L.S.2.15 / Lassen #1)</name>
    <name type="common">Sulfolobus islandicus</name>
    <dbReference type="NCBI Taxonomy" id="429572"/>
    <lineage>
        <taxon>Archaea</taxon>
        <taxon>Thermoproteota</taxon>
        <taxon>Thermoprotei</taxon>
        <taxon>Sulfolobales</taxon>
        <taxon>Sulfolobaceae</taxon>
        <taxon>Saccharolobus</taxon>
    </lineage>
</organism>
<protein>
    <recommendedName>
        <fullName evidence="1">Elongation factor 1-beta</fullName>
        <shortName evidence="1">EF-1-beta</shortName>
    </recommendedName>
    <alternativeName>
        <fullName evidence="1">aEF-1beta</fullName>
    </alternativeName>
</protein>
<comment type="function">
    <text evidence="1">Promotes the exchange of GDP for GTP in EF-1-alpha/GDP, thus allowing the regeneration of EF-1-alpha/GTP that could then be used to form the ternary complex EF-1-alpha/GTP/AAtRNA.</text>
</comment>
<comment type="similarity">
    <text evidence="1">Belongs to the EF-1-beta/EF-1-delta family.</text>
</comment>
<dbReference type="EMBL" id="CP001399">
    <property type="protein sequence ID" value="ACP36115.1"/>
    <property type="molecule type" value="Genomic_DNA"/>
</dbReference>
<dbReference type="RefSeq" id="WP_012711931.1">
    <property type="nucleotide sequence ID" value="NC_012589.1"/>
</dbReference>
<dbReference type="SMR" id="C3MJ28"/>
<dbReference type="KEGG" id="sis:LS215_2123"/>
<dbReference type="HOGENOM" id="CLU_165896_1_0_2"/>
<dbReference type="OrthoDB" id="84643at2157"/>
<dbReference type="Proteomes" id="UP000001747">
    <property type="component" value="Chromosome"/>
</dbReference>
<dbReference type="GO" id="GO:0003746">
    <property type="term" value="F:translation elongation factor activity"/>
    <property type="evidence" value="ECO:0007669"/>
    <property type="project" value="UniProtKB-UniRule"/>
</dbReference>
<dbReference type="CDD" id="cd00292">
    <property type="entry name" value="EF1B"/>
    <property type="match status" value="1"/>
</dbReference>
<dbReference type="Gene3D" id="3.30.70.60">
    <property type="match status" value="1"/>
</dbReference>
<dbReference type="HAMAP" id="MF_00043">
    <property type="entry name" value="EF1_beta"/>
    <property type="match status" value="1"/>
</dbReference>
<dbReference type="InterPro" id="IPR036219">
    <property type="entry name" value="eEF-1beta-like_sf"/>
</dbReference>
<dbReference type="InterPro" id="IPR014038">
    <property type="entry name" value="EF1B_bsu/dsu_GNE"/>
</dbReference>
<dbReference type="InterPro" id="IPR014717">
    <property type="entry name" value="Transl_elong_EF1B/ribsomal_bS6"/>
</dbReference>
<dbReference type="InterPro" id="IPR004542">
    <property type="entry name" value="Transl_elong_EF1B_B_arc"/>
</dbReference>
<dbReference type="NCBIfam" id="TIGR00489">
    <property type="entry name" value="aEF-1_beta"/>
    <property type="match status" value="1"/>
</dbReference>
<dbReference type="NCBIfam" id="NF001670">
    <property type="entry name" value="PRK00435.1"/>
    <property type="match status" value="1"/>
</dbReference>
<dbReference type="PANTHER" id="PTHR39647">
    <property type="entry name" value="ELONGATION FACTOR 1-BETA"/>
    <property type="match status" value="1"/>
</dbReference>
<dbReference type="PANTHER" id="PTHR39647:SF1">
    <property type="entry name" value="ELONGATION FACTOR 1-BETA"/>
    <property type="match status" value="1"/>
</dbReference>
<dbReference type="Pfam" id="PF00736">
    <property type="entry name" value="EF1_GNE"/>
    <property type="match status" value="1"/>
</dbReference>
<dbReference type="PIRSF" id="PIRSF006521">
    <property type="entry name" value="Transl_elong_EF1B_B_arc"/>
    <property type="match status" value="1"/>
</dbReference>
<dbReference type="SMART" id="SM00888">
    <property type="entry name" value="EF1_GNE"/>
    <property type="match status" value="1"/>
</dbReference>
<dbReference type="SUPFAM" id="SSF54984">
    <property type="entry name" value="eEF-1beta-like"/>
    <property type="match status" value="1"/>
</dbReference>
<reference key="1">
    <citation type="journal article" date="2009" name="Proc. Natl. Acad. Sci. U.S.A.">
        <title>Biogeography of the Sulfolobus islandicus pan-genome.</title>
        <authorList>
            <person name="Reno M.L."/>
            <person name="Held N.L."/>
            <person name="Fields C.J."/>
            <person name="Burke P.V."/>
            <person name="Whitaker R.J."/>
        </authorList>
    </citation>
    <scope>NUCLEOTIDE SEQUENCE [LARGE SCALE GENOMIC DNA]</scope>
    <source>
        <strain>L.S.2.15 / Lassen #1</strain>
    </source>
</reference>
<accession>C3MJ28</accession>
<evidence type="ECO:0000255" key="1">
    <source>
        <dbReference type="HAMAP-Rule" id="MF_00043"/>
    </source>
</evidence>
<proteinExistence type="inferred from homology"/>
<feature type="chain" id="PRO_1000202144" description="Elongation factor 1-beta">
    <location>
        <begin position="1"/>
        <end position="91"/>
    </location>
</feature>
<name>EF1B_SACI2</name>
<gene>
    <name evidence="1" type="primary">ef1b</name>
    <name type="ordered locus">LS215_2123</name>
</gene>
<keyword id="KW-0251">Elongation factor</keyword>
<keyword id="KW-0648">Protein biosynthesis</keyword>
<sequence>MTDVLVVLKVFPDSDEVNLDNLYTDISNKLPKEYRIIRKETEPIAFGLNALILYVQMPEQTEGGTDNLEEVVNNIQGVSHAEVVGITRLGF</sequence>